<reference key="1">
    <citation type="journal article" date="2007" name="Genome Biol.">
        <title>Comparison of Francisella tularensis genomes reveals evolutionary events associated with the emergence of human pathogenic strains.</title>
        <authorList>
            <person name="Rohmer L."/>
            <person name="Fong C."/>
            <person name="Abmayr S."/>
            <person name="Wasnick M."/>
            <person name="Larson Freeman T.J."/>
            <person name="Radey M."/>
            <person name="Guina T."/>
            <person name="Svensson K."/>
            <person name="Hayden H.S."/>
            <person name="Jacobs M."/>
            <person name="Gallagher L.A."/>
            <person name="Manoil C."/>
            <person name="Ernst R.K."/>
            <person name="Drees B."/>
            <person name="Buckley D."/>
            <person name="Haugen E."/>
            <person name="Bovee D."/>
            <person name="Zhou Y."/>
            <person name="Chang J."/>
            <person name="Levy R."/>
            <person name="Lim R."/>
            <person name="Gillett W."/>
            <person name="Guenthener D."/>
            <person name="Kang A."/>
            <person name="Shaffer S.A."/>
            <person name="Taylor G."/>
            <person name="Chen J."/>
            <person name="Gallis B."/>
            <person name="D'Argenio D.A."/>
            <person name="Forsman M."/>
            <person name="Olson M.V."/>
            <person name="Goodlett D.R."/>
            <person name="Kaul R."/>
            <person name="Miller S.I."/>
            <person name="Brittnacher M.J."/>
        </authorList>
    </citation>
    <scope>NUCLEOTIDE SEQUENCE [LARGE SCALE GENOMIC DNA]</scope>
    <source>
        <strain>U112</strain>
    </source>
</reference>
<sequence>MKATQTLIATTKELPKEAVLISHQYMLKAGLIKKLASGIYTWMPLGLKVLQKIQNIVRDEMNKAGASELLLPSILPSELLQETHRWDKFGPELLKLHDRHNRDFCYGPTHEEPIVDMARDTIKSYKQLPLNLYQIQTKFRDEIRPRFGVMRAREFIMKDAYSFHENSQCLRNTYNTMYATYCNILDKIGLAYRPVKADTGAIGGDNSHEFQVLANAGEDIICYSNGSDYAANIELATYAKPDLSKRVNSQNTIEKIHTPNIKTIEKLCKEMSFDIKKTIKTMVIKDAEGNFFALVIRGDHELNETKINKLEQIVAPYTLATKEEIFSIFNANPGSLGIYNCPISIIADYSAIAIIDLVCGANQDDYHFTNVNWDRDVTNYQIADIRNVVTGDISPDGKGTLELTNGIEVGHIFELEDVYSKPMNANIIGQDGKSKPMLMGCYGFGVSRVMAAAIEQSHDENGIIWPESIAPYQVAILPINYNKSDKVKEVADKLYQDLLGDGIDVLLDDRGARPGVMFADADLIGYSHHVVIGDRLLEQGLIEYKNRKTQEKQEITITELIKILT</sequence>
<evidence type="ECO:0000255" key="1">
    <source>
        <dbReference type="HAMAP-Rule" id="MF_01569"/>
    </source>
</evidence>
<protein>
    <recommendedName>
        <fullName evidence="1">Proline--tRNA ligase</fullName>
        <ecNumber evidence="1">6.1.1.15</ecNumber>
    </recommendedName>
    <alternativeName>
        <fullName evidence="1">Prolyl-tRNA synthetase</fullName>
        <shortName evidence="1">ProRS</shortName>
    </alternativeName>
</protein>
<comment type="function">
    <text evidence="1">Catalyzes the attachment of proline to tRNA(Pro) in a two-step reaction: proline is first activated by ATP to form Pro-AMP and then transferred to the acceptor end of tRNA(Pro). As ProRS can inadvertently accommodate and process non-cognate amino acids such as alanine and cysteine, to avoid such errors it has two additional distinct editing activities against alanine. One activity is designated as 'pretransfer' editing and involves the tRNA(Pro)-independent hydrolysis of activated Ala-AMP. The other activity is designated 'posttransfer' editing and involves deacylation of mischarged Ala-tRNA(Pro). The misacylated Cys-tRNA(Pro) is not edited by ProRS.</text>
</comment>
<comment type="catalytic activity">
    <reaction evidence="1">
        <text>tRNA(Pro) + L-proline + ATP = L-prolyl-tRNA(Pro) + AMP + diphosphate</text>
        <dbReference type="Rhea" id="RHEA:14305"/>
        <dbReference type="Rhea" id="RHEA-COMP:9700"/>
        <dbReference type="Rhea" id="RHEA-COMP:9702"/>
        <dbReference type="ChEBI" id="CHEBI:30616"/>
        <dbReference type="ChEBI" id="CHEBI:33019"/>
        <dbReference type="ChEBI" id="CHEBI:60039"/>
        <dbReference type="ChEBI" id="CHEBI:78442"/>
        <dbReference type="ChEBI" id="CHEBI:78532"/>
        <dbReference type="ChEBI" id="CHEBI:456215"/>
        <dbReference type="EC" id="6.1.1.15"/>
    </reaction>
</comment>
<comment type="subunit">
    <text evidence="1">Homodimer.</text>
</comment>
<comment type="subcellular location">
    <subcellularLocation>
        <location evidence="1">Cytoplasm</location>
    </subcellularLocation>
</comment>
<comment type="domain">
    <text evidence="1">Consists of three domains: the N-terminal catalytic domain, the editing domain and the C-terminal anticodon-binding domain.</text>
</comment>
<comment type="similarity">
    <text evidence="1">Belongs to the class-II aminoacyl-tRNA synthetase family. ProS type 1 subfamily.</text>
</comment>
<organism>
    <name type="scientific">Francisella tularensis subsp. novicida (strain U112)</name>
    <dbReference type="NCBI Taxonomy" id="401614"/>
    <lineage>
        <taxon>Bacteria</taxon>
        <taxon>Pseudomonadati</taxon>
        <taxon>Pseudomonadota</taxon>
        <taxon>Gammaproteobacteria</taxon>
        <taxon>Thiotrichales</taxon>
        <taxon>Francisellaceae</taxon>
        <taxon>Francisella</taxon>
    </lineage>
</organism>
<dbReference type="EC" id="6.1.1.15" evidence="1"/>
<dbReference type="EMBL" id="CP000439">
    <property type="protein sequence ID" value="ABK90248.1"/>
    <property type="molecule type" value="Genomic_DNA"/>
</dbReference>
<dbReference type="RefSeq" id="WP_003040241.1">
    <property type="nucleotide sequence ID" value="NC_008601.1"/>
</dbReference>
<dbReference type="SMR" id="A0Q7N3"/>
<dbReference type="KEGG" id="ftn:FTN_1377"/>
<dbReference type="KEGG" id="ftx:AW25_626"/>
<dbReference type="BioCyc" id="FTUL401614:G1G75-1422-MONOMER"/>
<dbReference type="Proteomes" id="UP000000762">
    <property type="component" value="Chromosome"/>
</dbReference>
<dbReference type="GO" id="GO:0005829">
    <property type="term" value="C:cytosol"/>
    <property type="evidence" value="ECO:0007669"/>
    <property type="project" value="TreeGrafter"/>
</dbReference>
<dbReference type="GO" id="GO:0002161">
    <property type="term" value="F:aminoacyl-tRNA deacylase activity"/>
    <property type="evidence" value="ECO:0007669"/>
    <property type="project" value="InterPro"/>
</dbReference>
<dbReference type="GO" id="GO:0005524">
    <property type="term" value="F:ATP binding"/>
    <property type="evidence" value="ECO:0007669"/>
    <property type="project" value="UniProtKB-UniRule"/>
</dbReference>
<dbReference type="GO" id="GO:0004827">
    <property type="term" value="F:proline-tRNA ligase activity"/>
    <property type="evidence" value="ECO:0007669"/>
    <property type="project" value="UniProtKB-UniRule"/>
</dbReference>
<dbReference type="GO" id="GO:0006433">
    <property type="term" value="P:prolyl-tRNA aminoacylation"/>
    <property type="evidence" value="ECO:0007669"/>
    <property type="project" value="UniProtKB-UniRule"/>
</dbReference>
<dbReference type="CDD" id="cd04334">
    <property type="entry name" value="ProRS-INS"/>
    <property type="match status" value="1"/>
</dbReference>
<dbReference type="CDD" id="cd00861">
    <property type="entry name" value="ProRS_anticodon_short"/>
    <property type="match status" value="1"/>
</dbReference>
<dbReference type="CDD" id="cd00779">
    <property type="entry name" value="ProRS_core_prok"/>
    <property type="match status" value="1"/>
</dbReference>
<dbReference type="FunFam" id="3.30.930.10:FF:000015">
    <property type="entry name" value="Proline--tRNA ligase"/>
    <property type="match status" value="1"/>
</dbReference>
<dbReference type="Gene3D" id="3.40.50.800">
    <property type="entry name" value="Anticodon-binding domain"/>
    <property type="match status" value="1"/>
</dbReference>
<dbReference type="Gene3D" id="3.30.930.10">
    <property type="entry name" value="Bira Bifunctional Protein, Domain 2"/>
    <property type="match status" value="2"/>
</dbReference>
<dbReference type="HAMAP" id="MF_01569">
    <property type="entry name" value="Pro_tRNA_synth_type1"/>
    <property type="match status" value="1"/>
</dbReference>
<dbReference type="InterPro" id="IPR002314">
    <property type="entry name" value="aa-tRNA-synt_IIb"/>
</dbReference>
<dbReference type="InterPro" id="IPR006195">
    <property type="entry name" value="aa-tRNA-synth_II"/>
</dbReference>
<dbReference type="InterPro" id="IPR045864">
    <property type="entry name" value="aa-tRNA-synth_II/BPL/LPL"/>
</dbReference>
<dbReference type="InterPro" id="IPR004154">
    <property type="entry name" value="Anticodon-bd"/>
</dbReference>
<dbReference type="InterPro" id="IPR036621">
    <property type="entry name" value="Anticodon-bd_dom_sf"/>
</dbReference>
<dbReference type="InterPro" id="IPR002316">
    <property type="entry name" value="Pro-tRNA-ligase_IIa"/>
</dbReference>
<dbReference type="InterPro" id="IPR004500">
    <property type="entry name" value="Pro-tRNA-synth_IIa_bac-type"/>
</dbReference>
<dbReference type="InterPro" id="IPR023717">
    <property type="entry name" value="Pro-tRNA-Synthase_IIa_type1"/>
</dbReference>
<dbReference type="InterPro" id="IPR050062">
    <property type="entry name" value="Pro-tRNA_synthetase"/>
</dbReference>
<dbReference type="InterPro" id="IPR044140">
    <property type="entry name" value="ProRS_anticodon_short"/>
</dbReference>
<dbReference type="InterPro" id="IPR033730">
    <property type="entry name" value="ProRS_core_prok"/>
</dbReference>
<dbReference type="InterPro" id="IPR036754">
    <property type="entry name" value="YbaK/aa-tRNA-synt-asso_dom_sf"/>
</dbReference>
<dbReference type="InterPro" id="IPR007214">
    <property type="entry name" value="YbaK/aa-tRNA-synth-assoc-dom"/>
</dbReference>
<dbReference type="NCBIfam" id="NF006625">
    <property type="entry name" value="PRK09194.1"/>
    <property type="match status" value="1"/>
</dbReference>
<dbReference type="NCBIfam" id="TIGR00409">
    <property type="entry name" value="proS_fam_II"/>
    <property type="match status" value="1"/>
</dbReference>
<dbReference type="PANTHER" id="PTHR42753">
    <property type="entry name" value="MITOCHONDRIAL RIBOSOME PROTEIN L39/PROLYL-TRNA LIGASE FAMILY MEMBER"/>
    <property type="match status" value="1"/>
</dbReference>
<dbReference type="PANTHER" id="PTHR42753:SF2">
    <property type="entry name" value="PROLINE--TRNA LIGASE"/>
    <property type="match status" value="1"/>
</dbReference>
<dbReference type="Pfam" id="PF03129">
    <property type="entry name" value="HGTP_anticodon"/>
    <property type="match status" value="1"/>
</dbReference>
<dbReference type="Pfam" id="PF00587">
    <property type="entry name" value="tRNA-synt_2b"/>
    <property type="match status" value="1"/>
</dbReference>
<dbReference type="Pfam" id="PF04073">
    <property type="entry name" value="tRNA_edit"/>
    <property type="match status" value="1"/>
</dbReference>
<dbReference type="PRINTS" id="PR01046">
    <property type="entry name" value="TRNASYNTHPRO"/>
</dbReference>
<dbReference type="SUPFAM" id="SSF52954">
    <property type="entry name" value="Class II aaRS ABD-related"/>
    <property type="match status" value="1"/>
</dbReference>
<dbReference type="SUPFAM" id="SSF55681">
    <property type="entry name" value="Class II aaRS and biotin synthetases"/>
    <property type="match status" value="1"/>
</dbReference>
<dbReference type="SUPFAM" id="SSF55826">
    <property type="entry name" value="YbaK/ProRS associated domain"/>
    <property type="match status" value="1"/>
</dbReference>
<dbReference type="PROSITE" id="PS50862">
    <property type="entry name" value="AA_TRNA_LIGASE_II"/>
    <property type="match status" value="1"/>
</dbReference>
<proteinExistence type="inferred from homology"/>
<accession>A0Q7N3</accession>
<feature type="chain" id="PRO_0000288328" description="Proline--tRNA ligase">
    <location>
        <begin position="1"/>
        <end position="565"/>
    </location>
</feature>
<keyword id="KW-0030">Aminoacyl-tRNA synthetase</keyword>
<keyword id="KW-0067">ATP-binding</keyword>
<keyword id="KW-0963">Cytoplasm</keyword>
<keyword id="KW-0436">Ligase</keyword>
<keyword id="KW-0547">Nucleotide-binding</keyword>
<keyword id="KW-0648">Protein biosynthesis</keyword>
<gene>
    <name evidence="1" type="primary">proS</name>
    <name type="ordered locus">FTN_1377</name>
</gene>
<name>SYP_FRATN</name>